<keyword id="KW-1185">Reference proteome</keyword>
<proteinExistence type="predicted"/>
<dbReference type="EMBL" id="AY653733">
    <property type="protein sequence ID" value="AAV50788.1"/>
    <property type="molecule type" value="Genomic_DNA"/>
</dbReference>
<dbReference type="KEGG" id="vg:9925157"/>
<dbReference type="Proteomes" id="UP000001134">
    <property type="component" value="Genome"/>
</dbReference>
<name>YL524_MIMIV</name>
<gene>
    <name type="ordered locus">MIMI_L524</name>
</gene>
<reference key="1">
    <citation type="journal article" date="2004" name="Science">
        <title>The 1.2-megabase genome sequence of Mimivirus.</title>
        <authorList>
            <person name="Raoult D."/>
            <person name="Audic S."/>
            <person name="Robert C."/>
            <person name="Abergel C."/>
            <person name="Renesto P."/>
            <person name="Ogata H."/>
            <person name="La Scola B."/>
            <person name="Susan M."/>
            <person name="Claverie J.-M."/>
        </authorList>
    </citation>
    <scope>NUCLEOTIDE SEQUENCE [LARGE SCALE GENOMIC DNA]</scope>
    <source>
        <strain>Rowbotham-Bradford</strain>
    </source>
</reference>
<feature type="chain" id="PRO_0000244002" description="Uncharacterized protein L524">
    <location>
        <begin position="1"/>
        <end position="379"/>
    </location>
</feature>
<organismHost>
    <name type="scientific">Acanthamoeba polyphaga</name>
    <name type="common">Amoeba</name>
    <dbReference type="NCBI Taxonomy" id="5757"/>
</organismHost>
<accession>Q5UQ85</accession>
<sequence length="379" mass="44738">MMGSTNSLFNQPNDSHFDDLFNGTTISNFHNQISDKISDSFTLVDSSDTVLIDGCHDDPYDTVIIISRNSDIQKICHKYHINYPVRLHTIRCHCDKICSAIRRLDTNIRHSVVYTIEKMYPDKRYESYPNRIHICDTVRNSKIFDSKKFLGQLFGDDLYYKKFFVKEYFEKYSDKHLHQTIRTRQLLDEIPSVCMCNSFTQSVNNLNAGIVLLGDKHQLEPISLIFNQRVRKTEFSELFVYNTKDIDNISHRNSNHTLKRLKESKKLNKLSDYHTLLGNEINVFNREILSFSFGKREWYVDHTETSFECAKRELFEEFNIQISSNIFKYNKKLLESEPNKLKHIIDHESVLFFVYLPHILYVTYDVDSDTIFLDTEPLI</sequence>
<organism>
    <name type="scientific">Acanthamoeba polyphaga mimivirus</name>
    <name type="common">APMV</name>
    <dbReference type="NCBI Taxonomy" id="212035"/>
    <lineage>
        <taxon>Viruses</taxon>
        <taxon>Varidnaviria</taxon>
        <taxon>Bamfordvirae</taxon>
        <taxon>Nucleocytoviricota</taxon>
        <taxon>Megaviricetes</taxon>
        <taxon>Imitervirales</taxon>
        <taxon>Mimiviridae</taxon>
        <taxon>Megamimivirinae</taxon>
        <taxon>Mimivirus</taxon>
        <taxon>Mimivirus bradfordmassiliense</taxon>
    </lineage>
</organism>
<protein>
    <recommendedName>
        <fullName>Uncharacterized protein L524</fullName>
    </recommendedName>
</protein>